<dbReference type="EMBL" id="CU928160">
    <property type="protein sequence ID" value="CAQ98999.1"/>
    <property type="molecule type" value="Genomic_DNA"/>
</dbReference>
<dbReference type="RefSeq" id="WP_000130898.1">
    <property type="nucleotide sequence ID" value="NC_011741.1"/>
</dbReference>
<dbReference type="SMR" id="B7M460"/>
<dbReference type="KEGG" id="ecr:ECIAI1_2153"/>
<dbReference type="HOGENOM" id="CLU_000960_28_0_6"/>
<dbReference type="GO" id="GO:0005886">
    <property type="term" value="C:plasma membrane"/>
    <property type="evidence" value="ECO:0007669"/>
    <property type="project" value="UniProtKB-SubCell"/>
</dbReference>
<dbReference type="GO" id="GO:0022857">
    <property type="term" value="F:transmembrane transporter activity"/>
    <property type="evidence" value="ECO:0007669"/>
    <property type="project" value="UniProtKB-UniRule"/>
</dbReference>
<dbReference type="CDD" id="cd17503">
    <property type="entry name" value="MFS_LmrB_MDR_like"/>
    <property type="match status" value="1"/>
</dbReference>
<dbReference type="FunFam" id="1.20.1250.20:FF:000021">
    <property type="entry name" value="Putative multidrug resistance protein MdtD"/>
    <property type="match status" value="1"/>
</dbReference>
<dbReference type="FunFam" id="1.20.1720.10:FF:000001">
    <property type="entry name" value="Putative multidrug resistance protein MdtD"/>
    <property type="match status" value="1"/>
</dbReference>
<dbReference type="Gene3D" id="1.20.1250.20">
    <property type="entry name" value="MFS general substrate transporter like domains"/>
    <property type="match status" value="1"/>
</dbReference>
<dbReference type="Gene3D" id="1.20.1720.10">
    <property type="entry name" value="Multidrug resistance protein D"/>
    <property type="match status" value="1"/>
</dbReference>
<dbReference type="HAMAP" id="MF_01577">
    <property type="entry name" value="MFS_MdtD"/>
    <property type="match status" value="1"/>
</dbReference>
<dbReference type="InterPro" id="IPR004638">
    <property type="entry name" value="EmrB-like"/>
</dbReference>
<dbReference type="InterPro" id="IPR011701">
    <property type="entry name" value="MFS"/>
</dbReference>
<dbReference type="InterPro" id="IPR020846">
    <property type="entry name" value="MFS_dom"/>
</dbReference>
<dbReference type="InterPro" id="IPR036259">
    <property type="entry name" value="MFS_trans_sf"/>
</dbReference>
<dbReference type="InterPro" id="IPR023721">
    <property type="entry name" value="Multi-R_MdtD"/>
</dbReference>
<dbReference type="NCBIfam" id="TIGR00711">
    <property type="entry name" value="efflux_EmrB"/>
    <property type="match status" value="1"/>
</dbReference>
<dbReference type="NCBIfam" id="NF007799">
    <property type="entry name" value="PRK10504.1"/>
    <property type="match status" value="1"/>
</dbReference>
<dbReference type="PANTHER" id="PTHR42718:SF46">
    <property type="entry name" value="BLR6921 PROTEIN"/>
    <property type="match status" value="1"/>
</dbReference>
<dbReference type="PANTHER" id="PTHR42718">
    <property type="entry name" value="MAJOR FACILITATOR SUPERFAMILY MULTIDRUG TRANSPORTER MFSC"/>
    <property type="match status" value="1"/>
</dbReference>
<dbReference type="Pfam" id="PF07690">
    <property type="entry name" value="MFS_1"/>
    <property type="match status" value="1"/>
</dbReference>
<dbReference type="PRINTS" id="PR01036">
    <property type="entry name" value="TCRTETB"/>
</dbReference>
<dbReference type="SUPFAM" id="SSF103473">
    <property type="entry name" value="MFS general substrate transporter"/>
    <property type="match status" value="1"/>
</dbReference>
<dbReference type="PROSITE" id="PS50850">
    <property type="entry name" value="MFS"/>
    <property type="match status" value="1"/>
</dbReference>
<reference key="1">
    <citation type="journal article" date="2009" name="PLoS Genet.">
        <title>Organised genome dynamics in the Escherichia coli species results in highly diverse adaptive paths.</title>
        <authorList>
            <person name="Touchon M."/>
            <person name="Hoede C."/>
            <person name="Tenaillon O."/>
            <person name="Barbe V."/>
            <person name="Baeriswyl S."/>
            <person name="Bidet P."/>
            <person name="Bingen E."/>
            <person name="Bonacorsi S."/>
            <person name="Bouchier C."/>
            <person name="Bouvet O."/>
            <person name="Calteau A."/>
            <person name="Chiapello H."/>
            <person name="Clermont O."/>
            <person name="Cruveiller S."/>
            <person name="Danchin A."/>
            <person name="Diard M."/>
            <person name="Dossat C."/>
            <person name="Karoui M.E."/>
            <person name="Frapy E."/>
            <person name="Garry L."/>
            <person name="Ghigo J.M."/>
            <person name="Gilles A.M."/>
            <person name="Johnson J."/>
            <person name="Le Bouguenec C."/>
            <person name="Lescat M."/>
            <person name="Mangenot S."/>
            <person name="Martinez-Jehanne V."/>
            <person name="Matic I."/>
            <person name="Nassif X."/>
            <person name="Oztas S."/>
            <person name="Petit M.A."/>
            <person name="Pichon C."/>
            <person name="Rouy Z."/>
            <person name="Ruf C.S."/>
            <person name="Schneider D."/>
            <person name="Tourret J."/>
            <person name="Vacherie B."/>
            <person name="Vallenet D."/>
            <person name="Medigue C."/>
            <person name="Rocha E.P.C."/>
            <person name="Denamur E."/>
        </authorList>
    </citation>
    <scope>NUCLEOTIDE SEQUENCE [LARGE SCALE GENOMIC DNA]</scope>
    <source>
        <strain>IAI1</strain>
    </source>
</reference>
<organism>
    <name type="scientific">Escherichia coli O8 (strain IAI1)</name>
    <dbReference type="NCBI Taxonomy" id="585034"/>
    <lineage>
        <taxon>Bacteria</taxon>
        <taxon>Pseudomonadati</taxon>
        <taxon>Pseudomonadota</taxon>
        <taxon>Gammaproteobacteria</taxon>
        <taxon>Enterobacterales</taxon>
        <taxon>Enterobacteriaceae</taxon>
        <taxon>Escherichia</taxon>
    </lineage>
</organism>
<keyword id="KW-0997">Cell inner membrane</keyword>
<keyword id="KW-1003">Cell membrane</keyword>
<keyword id="KW-0472">Membrane</keyword>
<keyword id="KW-0812">Transmembrane</keyword>
<keyword id="KW-1133">Transmembrane helix</keyword>
<keyword id="KW-0813">Transport</keyword>
<gene>
    <name evidence="1" type="primary">mdtD</name>
    <name type="ordered locus">ECIAI1_2153</name>
</gene>
<protein>
    <recommendedName>
        <fullName evidence="1">Putative multidrug resistance protein MdtD</fullName>
    </recommendedName>
</protein>
<comment type="subcellular location">
    <subcellularLocation>
        <location evidence="1">Cell inner membrane</location>
        <topology evidence="1">Multi-pass membrane protein</topology>
    </subcellularLocation>
</comment>
<comment type="similarity">
    <text evidence="1">Belongs to the major facilitator superfamily. TCR/Tet family.</text>
</comment>
<feature type="chain" id="PRO_1000200777" description="Putative multidrug resistance protein MdtD">
    <location>
        <begin position="1"/>
        <end position="471"/>
    </location>
</feature>
<feature type="topological domain" description="Periplasmic" evidence="1">
    <location>
        <begin position="1"/>
        <end position="11"/>
    </location>
</feature>
<feature type="transmembrane region" description="Helical" evidence="1">
    <location>
        <begin position="12"/>
        <end position="32"/>
    </location>
</feature>
<feature type="topological domain" description="Cytoplasmic" evidence="1">
    <location>
        <begin position="33"/>
        <end position="48"/>
    </location>
</feature>
<feature type="transmembrane region" description="Helical" evidence="1">
    <location>
        <begin position="49"/>
        <end position="69"/>
    </location>
</feature>
<feature type="topological domain" description="Periplasmic" evidence="1">
    <location>
        <begin position="70"/>
        <end position="76"/>
    </location>
</feature>
<feature type="transmembrane region" description="Helical" evidence="1">
    <location>
        <begin position="77"/>
        <end position="97"/>
    </location>
</feature>
<feature type="topological domain" description="Cytoplasmic" evidence="1">
    <location>
        <begin position="98"/>
        <end position="101"/>
    </location>
</feature>
<feature type="transmembrane region" description="Helical" evidence="1">
    <location>
        <begin position="102"/>
        <end position="124"/>
    </location>
</feature>
<feature type="topological domain" description="Periplasmic" evidence="1">
    <location>
        <begin position="125"/>
        <end position="137"/>
    </location>
</feature>
<feature type="transmembrane region" description="Helical" evidence="1">
    <location>
        <begin position="138"/>
        <end position="158"/>
    </location>
</feature>
<feature type="topological domain" description="Cytoplasmic" evidence="1">
    <location>
        <begin position="159"/>
        <end position="164"/>
    </location>
</feature>
<feature type="transmembrane region" description="Helical" evidence="1">
    <location>
        <begin position="165"/>
        <end position="185"/>
    </location>
</feature>
<feature type="topological domain" description="Periplasmic" evidence="1">
    <location>
        <begin position="186"/>
        <end position="196"/>
    </location>
</feature>
<feature type="transmembrane region" description="Helical" evidence="1">
    <location>
        <begin position="197"/>
        <end position="217"/>
    </location>
</feature>
<feature type="topological domain" description="Cytoplasmic" evidence="1">
    <location>
        <begin position="218"/>
        <end position="224"/>
    </location>
</feature>
<feature type="transmembrane region" description="Helical" evidence="1">
    <location>
        <begin position="225"/>
        <end position="245"/>
    </location>
</feature>
<feature type="topological domain" description="Periplasmic" evidence="1">
    <location>
        <begin position="246"/>
        <end position="262"/>
    </location>
</feature>
<feature type="transmembrane region" description="Helical" evidence="1">
    <location>
        <begin position="263"/>
        <end position="283"/>
    </location>
</feature>
<feature type="topological domain" description="Cytoplasmic" evidence="1">
    <location>
        <begin position="284"/>
        <end position="285"/>
    </location>
</feature>
<feature type="transmembrane region" description="Helical" evidence="1">
    <location>
        <begin position="286"/>
        <end position="306"/>
    </location>
</feature>
<feature type="topological domain" description="Periplasmic" evidence="1">
    <location>
        <begin position="307"/>
        <end position="341"/>
    </location>
</feature>
<feature type="transmembrane region" description="Helical" evidence="1">
    <location>
        <begin position="342"/>
        <end position="362"/>
    </location>
</feature>
<feature type="topological domain" description="Cytoplasmic" evidence="1">
    <location>
        <begin position="363"/>
        <end position="395"/>
    </location>
</feature>
<feature type="transmembrane region" description="Helical" evidence="1">
    <location>
        <begin position="396"/>
        <end position="416"/>
    </location>
</feature>
<feature type="topological domain" description="Periplasmic" evidence="1">
    <location>
        <begin position="417"/>
        <end position="430"/>
    </location>
</feature>
<feature type="transmembrane region" description="Helical" evidence="1">
    <location>
        <begin position="431"/>
        <end position="451"/>
    </location>
</feature>
<feature type="topological domain" description="Cytoplasmic" evidence="1">
    <location>
        <begin position="452"/>
        <end position="471"/>
    </location>
</feature>
<accession>B7M460</accession>
<sequence length="471" mass="50997">MTDLPDSTRWQLWIVAFGFFMQSLDTTIVNTALPSMAQSLGESPLHMHMVIVSYVLTVAVMLPASGWLADKVGVRNIFFTAIVLFTLGSLFCALSGTLNELLLARALQGVGGAMMVPVGRLTVMKIVPREQYMAAMTFVTLPGQVGPLLGPALGGLLVEYASWHWIFLINIPVGIIGAIATLMLMPNYTMQTRRFDLSGFLLLAVGMAVLTLALDGSKGTGLSPLTIDGLVAVGVVALVLYLLHARNNNRALFSLKLFRTRTFSLGLAGSFAGRIGSGMLPFMTPVFLQIGLGFSPFHAGLMMIPMVLGSMGMKRIVVQVVNRFGYRRVLVATTLGLSLVTLLFMTTALLGWYYVLPFVLFLQGMVNSTRFSSMNTLTLKDLPDNLASSGNSLLSMIMQLSMSIGVTIAGLLLGLFGSQHVSVDSGTTQTVFMYTWLSMAFIIALPAFIFARVPNDTHQNVAISRRKRSAQ</sequence>
<name>MDTD_ECO8A</name>
<proteinExistence type="inferred from homology"/>
<evidence type="ECO:0000255" key="1">
    <source>
        <dbReference type="HAMAP-Rule" id="MF_01577"/>
    </source>
</evidence>